<organism>
    <name type="scientific">Saccharomyces cerevisiae (strain ATCC 204508 / S288c)</name>
    <name type="common">Baker's yeast</name>
    <dbReference type="NCBI Taxonomy" id="559292"/>
    <lineage>
        <taxon>Eukaryota</taxon>
        <taxon>Fungi</taxon>
        <taxon>Dikarya</taxon>
        <taxon>Ascomycota</taxon>
        <taxon>Saccharomycotina</taxon>
        <taxon>Saccharomycetes</taxon>
        <taxon>Saccharomycetales</taxon>
        <taxon>Saccharomycetaceae</taxon>
        <taxon>Saccharomyces</taxon>
    </lineage>
</organism>
<feature type="chain" id="PRO_0000212687" description="ADP-ribosylation factor-binding protein GGA2">
    <location>
        <begin position="1"/>
        <end position="585"/>
    </location>
</feature>
<feature type="domain" description="VHS" evidence="2">
    <location>
        <begin position="33"/>
        <end position="169"/>
    </location>
</feature>
<feature type="domain" description="GAT" evidence="3">
    <location>
        <begin position="196"/>
        <end position="321"/>
    </location>
</feature>
<feature type="domain" description="GAE" evidence="1">
    <location>
        <begin position="466"/>
        <end position="581"/>
    </location>
</feature>
<feature type="region of interest" description="Disordered" evidence="4">
    <location>
        <begin position="358"/>
        <end position="378"/>
    </location>
</feature>
<feature type="compositionally biased region" description="Low complexity" evidence="4">
    <location>
        <begin position="365"/>
        <end position="374"/>
    </location>
</feature>
<feature type="cross-link" description="Glycyl lysine isopeptide (Lys-Gly) (interchain with G-Cter in ubiquitin)" evidence="9">
    <location>
        <position position="180"/>
    </location>
</feature>
<feature type="cross-link" description="Glycyl lysine isopeptide (Lys-Gly) (interchain with G-Cter in ubiquitin)" evidence="9">
    <location>
        <position position="287"/>
    </location>
</feature>
<feature type="mutagenesis site" description="Reduced binding to ENT3." evidence="7">
    <original>K</original>
    <variation>Q</variation>
    <location>
        <position position="560"/>
    </location>
</feature>
<feature type="mutagenesis site" description="Reduced binding to ENT3 and ENT5." evidence="7">
    <original>W</original>
    <variation>A</variation>
    <location>
        <position position="563"/>
    </location>
</feature>
<feature type="mutagenesis site" description="Reduced binding to ENT3 and ENT5." evidence="7">
    <original>K</original>
    <variation>Q</variation>
    <location>
        <position position="564"/>
    </location>
</feature>
<feature type="strand" evidence="10">
    <location>
        <begin position="472"/>
        <end position="477"/>
    </location>
</feature>
<feature type="strand" evidence="10">
    <location>
        <begin position="479"/>
        <end position="489"/>
    </location>
</feature>
<feature type="strand" evidence="10">
    <location>
        <begin position="491"/>
        <end position="493"/>
    </location>
</feature>
<feature type="strand" evidence="10">
    <location>
        <begin position="495"/>
        <end position="503"/>
    </location>
</feature>
<feature type="strand" evidence="10">
    <location>
        <begin position="505"/>
        <end position="507"/>
    </location>
</feature>
<feature type="strand" evidence="10">
    <location>
        <begin position="509"/>
        <end position="517"/>
    </location>
</feature>
<feature type="strand" evidence="10">
    <location>
        <begin position="522"/>
        <end position="526"/>
    </location>
</feature>
<feature type="strand" evidence="10">
    <location>
        <begin position="546"/>
        <end position="550"/>
    </location>
</feature>
<feature type="strand" evidence="10">
    <location>
        <begin position="560"/>
        <end position="569"/>
    </location>
</feature>
<feature type="strand" evidence="10">
    <location>
        <begin position="572"/>
        <end position="581"/>
    </location>
</feature>
<name>GGA2_YEAST</name>
<proteinExistence type="evidence at protein level"/>
<reference key="1">
    <citation type="journal article" date="1994" name="Science">
        <title>Complete nucleotide sequence of Saccharomyces cerevisiae chromosome VIII.</title>
        <authorList>
            <person name="Johnston M."/>
            <person name="Andrews S."/>
            <person name="Brinkman R."/>
            <person name="Cooper J."/>
            <person name="Ding H."/>
            <person name="Dover J."/>
            <person name="Du Z."/>
            <person name="Favello A."/>
            <person name="Fulton L."/>
            <person name="Gattung S."/>
            <person name="Geisel C."/>
            <person name="Kirsten J."/>
            <person name="Kucaba T."/>
            <person name="Hillier L.W."/>
            <person name="Jier M."/>
            <person name="Johnston L."/>
            <person name="Langston Y."/>
            <person name="Latreille P."/>
            <person name="Louis E.J."/>
            <person name="Macri C."/>
            <person name="Mardis E."/>
            <person name="Menezes S."/>
            <person name="Mouser L."/>
            <person name="Nhan M."/>
            <person name="Rifkin L."/>
            <person name="Riles L."/>
            <person name="St Peter H."/>
            <person name="Trevaskis E."/>
            <person name="Vaughan K."/>
            <person name="Vignati D."/>
            <person name="Wilcox L."/>
            <person name="Wohldman P."/>
            <person name="Waterston R."/>
            <person name="Wilson R."/>
            <person name="Vaudin M."/>
        </authorList>
    </citation>
    <scope>NUCLEOTIDE SEQUENCE [LARGE SCALE GENOMIC DNA]</scope>
    <source>
        <strain>ATCC 204508 / S288c</strain>
    </source>
</reference>
<reference key="2">
    <citation type="journal article" date="2014" name="G3 (Bethesda)">
        <title>The reference genome sequence of Saccharomyces cerevisiae: Then and now.</title>
        <authorList>
            <person name="Engel S.R."/>
            <person name="Dietrich F.S."/>
            <person name="Fisk D.G."/>
            <person name="Binkley G."/>
            <person name="Balakrishnan R."/>
            <person name="Costanzo M.C."/>
            <person name="Dwight S.S."/>
            <person name="Hitz B.C."/>
            <person name="Karra K."/>
            <person name="Nash R.S."/>
            <person name="Weng S."/>
            <person name="Wong E.D."/>
            <person name="Lloyd P."/>
            <person name="Skrzypek M.S."/>
            <person name="Miyasato S.R."/>
            <person name="Simison M."/>
            <person name="Cherry J.M."/>
        </authorList>
    </citation>
    <scope>GENOME REANNOTATION</scope>
    <source>
        <strain>ATCC 204508 / S288c</strain>
    </source>
</reference>
<reference key="3">
    <citation type="journal article" date="2000" name="J. Cell Biol.">
        <title>A family of proteins with gamma-adaptin and VHS domains that facilitate trafficking between the trans-Golgi network and the vacuole/lysosome.</title>
        <authorList>
            <person name="Hirst J."/>
            <person name="Lui W.W.Y."/>
            <person name="Bright N.A."/>
            <person name="Totty N."/>
            <person name="Seaman M.N.J."/>
            <person name="Robinson M.S."/>
        </authorList>
    </citation>
    <scope>FUNCTION</scope>
</reference>
<reference key="4">
    <citation type="journal article" date="2001" name="Yeast">
        <title>Yeast GGA proteins interact with GTP-bound Arf and facilitate transport through the Golgi.</title>
        <authorList>
            <person name="Zhdankina O."/>
            <person name="Strand N.L."/>
            <person name="Redmond J.M."/>
            <person name="Boman A.L."/>
        </authorList>
    </citation>
    <scope>FUNCTION</scope>
    <scope>SUBUNIT</scope>
</reference>
<reference key="5">
    <citation type="journal article" date="2003" name="Nat. Cell Biol.">
        <title>Yeast epsin-related proteins required for Golgi-endosome traffic define a gamma-adaptin ear-binding motif.</title>
        <authorList>
            <person name="Duncan M.C."/>
            <person name="Costaguta G."/>
            <person name="Payne G.S."/>
        </authorList>
    </citation>
    <scope>INTERACTION WITH ENT3 AND ENT5</scope>
    <scope>MUTAGENESIS OF LYS-560; TRP-563 AND LYS-564</scope>
</reference>
<reference key="6">
    <citation type="journal article" date="2003" name="Nature">
        <title>Global analysis of protein expression in yeast.</title>
        <authorList>
            <person name="Ghaemmaghami S."/>
            <person name="Huh W.-K."/>
            <person name="Bower K."/>
            <person name="Howson R.W."/>
            <person name="Belle A."/>
            <person name="Dephoure N."/>
            <person name="O'Shea E.K."/>
            <person name="Weissman J.S."/>
        </authorList>
    </citation>
    <scope>LEVEL OF PROTEIN EXPRESSION [LARGE SCALE ANALYSIS]</scope>
</reference>
<reference key="7">
    <citation type="journal article" date="2012" name="Proteomics">
        <title>Sites of ubiquitin attachment in Saccharomyces cerevisiae.</title>
        <authorList>
            <person name="Starita L.M."/>
            <person name="Lo R.S."/>
            <person name="Eng J.K."/>
            <person name="von Haller P.D."/>
            <person name="Fields S."/>
        </authorList>
    </citation>
    <scope>UBIQUITINATION [LARGE SCALE ANALYSIS] AT LYS-180 AND LYS-287</scope>
    <scope>IDENTIFICATION BY MASS SPECTROMETRY [LARGE SCALE ANALYSIS]</scope>
</reference>
<sequence>MSHPHSHSIYLSELPVRKPQALGNPLLRKIQRACRMSLAEPDLALNLDIADYINEKQGAAPRDAAIALAKLINNRESHVAIFALSLLDVLVKNCGYPFHLQISRKEFLNELVKRFPGHPPLRYSKIQRLILTAIEEWYQTICKHSSYKNDMGYIRDMHRLLKYKGYAFPKISESDLAVLKPSNQLKTASEIQKEQEIAQAAKLEELIRRGKPEDLREANKLMKIMAGFKEDNAVQAKQAISSELNKLKRKADLLNEMLESPDSQNWDNETTQELHSALKVAQPKFQKIIEEEQEDDALVQDLLKFNDTVNQLLEKFNLLKNGDSNAASQIHPSHVSAPLQQSSGALTNEINLIDFNDLDEAPSQGNNNTNGTGTPAAAETSVNDLLGDLTDLSISNPSTANQASFGLGGDIVLGSSQPAPPVTTTNNSNNTLDLLGLSTPQSPTNSQAVNSSGFDLLMGFNPTTGTTTAPARTLVNQSPNLKIEFEISRESNSVIRIKSFFTNLSSSPISNLVFLLAVPKSMSLKLQPQSSNFMIGNAKDGISQEGTIENAPANPSKALKVKWKVNYSVNSTQAEETAVFTLPNV</sequence>
<gene>
    <name type="primary">GGA2</name>
    <name type="ordered locus">YHR108W</name>
</gene>
<evidence type="ECO:0000255" key="1">
    <source>
        <dbReference type="PROSITE-ProRule" id="PRU00093"/>
    </source>
</evidence>
<evidence type="ECO:0000255" key="2">
    <source>
        <dbReference type="PROSITE-ProRule" id="PRU00218"/>
    </source>
</evidence>
<evidence type="ECO:0000255" key="3">
    <source>
        <dbReference type="PROSITE-ProRule" id="PRU00373"/>
    </source>
</evidence>
<evidence type="ECO:0000256" key="4">
    <source>
        <dbReference type="SAM" id="MobiDB-lite"/>
    </source>
</evidence>
<evidence type="ECO:0000269" key="5">
    <source>
    </source>
</evidence>
<evidence type="ECO:0000269" key="6">
    <source>
    </source>
</evidence>
<evidence type="ECO:0000269" key="7">
    <source>
    </source>
</evidence>
<evidence type="ECO:0000269" key="8">
    <source>
    </source>
</evidence>
<evidence type="ECO:0007744" key="9">
    <source>
    </source>
</evidence>
<evidence type="ECO:0007829" key="10">
    <source>
        <dbReference type="PDB" id="3MNM"/>
    </source>
</evidence>
<keyword id="KW-0002">3D-structure</keyword>
<keyword id="KW-0175">Coiled coil</keyword>
<keyword id="KW-0333">Golgi apparatus</keyword>
<keyword id="KW-1017">Isopeptide bond</keyword>
<keyword id="KW-0653">Protein transport</keyword>
<keyword id="KW-1185">Reference proteome</keyword>
<keyword id="KW-0813">Transport</keyword>
<keyword id="KW-0832">Ubl conjugation</keyword>
<dbReference type="EMBL" id="U00059">
    <property type="protein sequence ID" value="AAB68854.1"/>
    <property type="molecule type" value="Genomic_DNA"/>
</dbReference>
<dbReference type="EMBL" id="BK006934">
    <property type="protein sequence ID" value="DAA06802.1"/>
    <property type="molecule type" value="Genomic_DNA"/>
</dbReference>
<dbReference type="PIR" id="S48950">
    <property type="entry name" value="S48950"/>
</dbReference>
<dbReference type="RefSeq" id="NP_011976.1">
    <property type="nucleotide sequence ID" value="NM_001179238.1"/>
</dbReference>
<dbReference type="PDB" id="3MNM">
    <property type="method" value="X-ray"/>
    <property type="resolution" value="1.73 A"/>
    <property type="chains" value="A/B/C=465-585"/>
</dbReference>
<dbReference type="PDBsum" id="3MNM"/>
<dbReference type="SMR" id="P38817"/>
<dbReference type="BioGRID" id="36541">
    <property type="interactions" value="179"/>
</dbReference>
<dbReference type="DIP" id="DIP-2971N"/>
<dbReference type="FunCoup" id="P38817">
    <property type="interactions" value="645"/>
</dbReference>
<dbReference type="IntAct" id="P38817">
    <property type="interactions" value="26"/>
</dbReference>
<dbReference type="MINT" id="P38817"/>
<dbReference type="STRING" id="4932.YHR108W"/>
<dbReference type="iPTMnet" id="P38817"/>
<dbReference type="PaxDb" id="4932-YHR108W"/>
<dbReference type="PeptideAtlas" id="P38817"/>
<dbReference type="EnsemblFungi" id="YHR108W_mRNA">
    <property type="protein sequence ID" value="YHR108W"/>
    <property type="gene ID" value="YHR108W"/>
</dbReference>
<dbReference type="GeneID" id="856508"/>
<dbReference type="KEGG" id="sce:YHR108W"/>
<dbReference type="AGR" id="SGD:S000001150"/>
<dbReference type="SGD" id="S000001150">
    <property type="gene designation" value="GGA2"/>
</dbReference>
<dbReference type="VEuPathDB" id="FungiDB:YHR108W"/>
<dbReference type="eggNOG" id="KOG1087">
    <property type="taxonomic scope" value="Eukaryota"/>
</dbReference>
<dbReference type="GeneTree" id="ENSGT00940000176423"/>
<dbReference type="HOGENOM" id="CLU_017092_0_0_1"/>
<dbReference type="InParanoid" id="P38817"/>
<dbReference type="OMA" id="PDNYEPN"/>
<dbReference type="OrthoDB" id="2018246at2759"/>
<dbReference type="BioCyc" id="YEAST:G3O-31151-MONOMER"/>
<dbReference type="BioGRID-ORCS" id="856508">
    <property type="hits" value="0 hits in 10 CRISPR screens"/>
</dbReference>
<dbReference type="CD-CODE" id="E03F929F">
    <property type="entry name" value="Stress granule"/>
</dbReference>
<dbReference type="EvolutionaryTrace" id="P38817"/>
<dbReference type="PRO" id="PR:P38817"/>
<dbReference type="Proteomes" id="UP000002311">
    <property type="component" value="Chromosome VIII"/>
</dbReference>
<dbReference type="RNAct" id="P38817">
    <property type="molecule type" value="protein"/>
</dbReference>
<dbReference type="GO" id="GO:0005829">
    <property type="term" value="C:cytosol"/>
    <property type="evidence" value="ECO:0007669"/>
    <property type="project" value="GOC"/>
</dbReference>
<dbReference type="GO" id="GO:0005802">
    <property type="term" value="C:trans-Golgi network"/>
    <property type="evidence" value="ECO:0000314"/>
    <property type="project" value="SGD"/>
</dbReference>
<dbReference type="GO" id="GO:0070273">
    <property type="term" value="F:phosphatidylinositol-4-phosphate binding"/>
    <property type="evidence" value="ECO:0000314"/>
    <property type="project" value="SGD"/>
</dbReference>
<dbReference type="GO" id="GO:0043130">
    <property type="term" value="F:ubiquitin binding"/>
    <property type="evidence" value="ECO:0000314"/>
    <property type="project" value="SGD"/>
</dbReference>
<dbReference type="GO" id="GO:0006895">
    <property type="term" value="P:Golgi to endosome transport"/>
    <property type="evidence" value="ECO:0000315"/>
    <property type="project" value="SGD"/>
</dbReference>
<dbReference type="GO" id="GO:0006896">
    <property type="term" value="P:Golgi to vacuole transport"/>
    <property type="evidence" value="ECO:0000315"/>
    <property type="project" value="SGD"/>
</dbReference>
<dbReference type="GO" id="GO:0043328">
    <property type="term" value="P:protein transport to vacuole involved in ubiquitin-dependent protein catabolic process via the multivesicular body sorting pathway"/>
    <property type="evidence" value="ECO:0000315"/>
    <property type="project" value="SGD"/>
</dbReference>
<dbReference type="CDD" id="cd14235">
    <property type="entry name" value="GAT_GGA_fungi"/>
    <property type="match status" value="1"/>
</dbReference>
<dbReference type="CDD" id="cd16998">
    <property type="entry name" value="VHS_GGA_fungi"/>
    <property type="match status" value="1"/>
</dbReference>
<dbReference type="FunFam" id="2.60.40.1230:FF:000011">
    <property type="entry name" value="ADP-ribosylation factor-binding protein GGA2"/>
    <property type="match status" value="1"/>
</dbReference>
<dbReference type="FunFam" id="1.20.58.160:FF:000003">
    <property type="entry name" value="VHS domain protein"/>
    <property type="match status" value="1"/>
</dbReference>
<dbReference type="FunFam" id="1.25.40.90:FF:000008">
    <property type="entry name" value="VHS domain protein"/>
    <property type="match status" value="1"/>
</dbReference>
<dbReference type="FunFam" id="1.20.5.170:FF:000024">
    <property type="entry name" value="VHS domain-containing protein"/>
    <property type="match status" value="1"/>
</dbReference>
<dbReference type="Gene3D" id="1.20.5.170">
    <property type="match status" value="1"/>
</dbReference>
<dbReference type="Gene3D" id="1.20.58.160">
    <property type="match status" value="1"/>
</dbReference>
<dbReference type="Gene3D" id="1.25.40.90">
    <property type="match status" value="1"/>
</dbReference>
<dbReference type="Gene3D" id="2.60.40.1230">
    <property type="match status" value="1"/>
</dbReference>
<dbReference type="InterPro" id="IPR052653">
    <property type="entry name" value="ARF-binding"/>
</dbReference>
<dbReference type="InterPro" id="IPR008152">
    <property type="entry name" value="Clathrin_a/b/g-adaptin_app_Ig"/>
</dbReference>
<dbReference type="InterPro" id="IPR013041">
    <property type="entry name" value="Clathrin_app_Ig-like_sf"/>
</dbReference>
<dbReference type="InterPro" id="IPR008942">
    <property type="entry name" value="ENTH_VHS"/>
</dbReference>
<dbReference type="InterPro" id="IPR008153">
    <property type="entry name" value="GAE_dom"/>
</dbReference>
<dbReference type="InterPro" id="IPR004152">
    <property type="entry name" value="GAT_dom"/>
</dbReference>
<dbReference type="InterPro" id="IPR038425">
    <property type="entry name" value="GAT_sf"/>
</dbReference>
<dbReference type="InterPro" id="IPR002014">
    <property type="entry name" value="VHS_dom"/>
</dbReference>
<dbReference type="PANTHER" id="PTHR47180">
    <property type="entry name" value="ADP-RIBOSYLATION FACTOR-BINDING PROTEIN GGA1-RELATED"/>
    <property type="match status" value="1"/>
</dbReference>
<dbReference type="PANTHER" id="PTHR47180:SF1">
    <property type="entry name" value="ADP-RIBOSYLATION FACTOR-BINDING PROTEIN GGA1-RELATED"/>
    <property type="match status" value="1"/>
</dbReference>
<dbReference type="Pfam" id="PF02883">
    <property type="entry name" value="Alpha_adaptinC2"/>
    <property type="match status" value="1"/>
</dbReference>
<dbReference type="Pfam" id="PF03127">
    <property type="entry name" value="GAT"/>
    <property type="match status" value="1"/>
</dbReference>
<dbReference type="Pfam" id="PF00790">
    <property type="entry name" value="VHS"/>
    <property type="match status" value="1"/>
</dbReference>
<dbReference type="SMART" id="SM00809">
    <property type="entry name" value="Alpha_adaptinC2"/>
    <property type="match status" value="1"/>
</dbReference>
<dbReference type="SMART" id="SM00288">
    <property type="entry name" value="VHS"/>
    <property type="match status" value="1"/>
</dbReference>
<dbReference type="SUPFAM" id="SSF49348">
    <property type="entry name" value="Clathrin adaptor appendage domain"/>
    <property type="match status" value="1"/>
</dbReference>
<dbReference type="SUPFAM" id="SSF48464">
    <property type="entry name" value="ENTH/VHS domain"/>
    <property type="match status" value="1"/>
</dbReference>
<dbReference type="SUPFAM" id="SSF89009">
    <property type="entry name" value="GAT-like domain"/>
    <property type="match status" value="1"/>
</dbReference>
<dbReference type="PROSITE" id="PS50180">
    <property type="entry name" value="GAE"/>
    <property type="match status" value="1"/>
</dbReference>
<dbReference type="PROSITE" id="PS50909">
    <property type="entry name" value="GAT"/>
    <property type="match status" value="1"/>
</dbReference>
<dbReference type="PROSITE" id="PS50179">
    <property type="entry name" value="VHS"/>
    <property type="match status" value="1"/>
</dbReference>
<comment type="function">
    <text evidence="5 6">May play a role in the regulation of membrane traffic through the trans-Golgi network.</text>
</comment>
<comment type="subunit">
    <text evidence="6">Binds to ARF1 and ARF2.</text>
</comment>
<comment type="interaction">
    <interactant intactId="EBI-7569">
        <id>P38817</id>
    </interactant>
    <interactant intactId="EBI-28333">
        <id>P48563</id>
        <label>MON2</label>
    </interactant>
    <organismsDiffer>false</organismsDiffer>
    <experiments>3</experiments>
</comment>
<comment type="interaction">
    <interactant intactId="EBI-7569">
        <id>P38817</id>
    </interactant>
    <interactant intactId="EBI-13423">
        <id>P39104</id>
        <label>PIK1</label>
    </interactant>
    <organismsDiffer>false</organismsDiffer>
    <experiments>3</experiments>
</comment>
<comment type="subcellular location">
    <subcellularLocation>
        <location>Golgi apparatus</location>
        <location>trans-Golgi network</location>
    </subcellularLocation>
</comment>
<comment type="miscellaneous">
    <text evidence="8">Present with 2270 molecules/cell in log phase SD medium.</text>
</comment>
<accession>P38817</accession>
<accession>D3DL58</accession>
<protein>
    <recommendedName>
        <fullName>ADP-ribosylation factor-binding protein GGA2</fullName>
    </recommendedName>
    <alternativeName>
        <fullName>Golgi-localized, gamma ear-containing, ARF-binding protein 2</fullName>
    </alternativeName>
</protein>